<protein>
    <recommendedName>
        <fullName>Probable feruloyl esterase B-2</fullName>
        <ecNumber evidence="3">3.1.1.73</ecNumber>
    </recommendedName>
    <alternativeName>
        <fullName>Ferulic acid esterase B-2</fullName>
        <shortName>FAEB-2</shortName>
    </alternativeName>
</protein>
<name>FAEB2_ASPTN</name>
<feature type="signal peptide" evidence="4">
    <location>
        <begin position="1"/>
        <end position="19"/>
    </location>
</feature>
<feature type="chain" id="PRO_0000394931" description="Probable feruloyl esterase B-2">
    <location>
        <begin position="20"/>
        <end position="527"/>
    </location>
</feature>
<feature type="active site" description="Acyl-ester intermediate" evidence="2">
    <location>
        <position position="188"/>
    </location>
</feature>
<feature type="active site" description="Charge relay system" evidence="2">
    <location>
        <position position="400"/>
    </location>
</feature>
<feature type="active site" description="Charge relay system" evidence="2">
    <location>
        <position position="440"/>
    </location>
</feature>
<feature type="binding site" evidence="2">
    <location>
        <position position="257"/>
    </location>
    <ligand>
        <name>Ca(2+)</name>
        <dbReference type="ChEBI" id="CHEBI:29108"/>
    </ligand>
</feature>
<feature type="binding site" evidence="2">
    <location>
        <position position="260"/>
    </location>
    <ligand>
        <name>Ca(2+)</name>
        <dbReference type="ChEBI" id="CHEBI:29108"/>
    </ligand>
</feature>
<feature type="binding site" evidence="2">
    <location>
        <position position="262"/>
    </location>
    <ligand>
        <name>Ca(2+)</name>
        <dbReference type="ChEBI" id="CHEBI:29108"/>
    </ligand>
</feature>
<feature type="binding site" evidence="2">
    <location>
        <position position="264"/>
    </location>
    <ligand>
        <name>Ca(2+)</name>
        <dbReference type="ChEBI" id="CHEBI:29108"/>
    </ligand>
</feature>
<feature type="binding site" evidence="2">
    <location>
        <position position="266"/>
    </location>
    <ligand>
        <name>Ca(2+)</name>
        <dbReference type="ChEBI" id="CHEBI:29108"/>
    </ligand>
</feature>
<feature type="glycosylation site" description="N-linked (GlcNAc...) asparagine" evidence="4">
    <location>
        <position position="53"/>
    </location>
</feature>
<feature type="glycosylation site" description="N-linked (GlcNAc...) asparagine" evidence="4">
    <location>
        <position position="85"/>
    </location>
</feature>
<feature type="glycosylation site" description="N-linked (GlcNAc...) asparagine" evidence="4">
    <location>
        <position position="98"/>
    </location>
</feature>
<feature type="glycosylation site" description="N-linked (GlcNAc...) asparagine" evidence="4">
    <location>
        <position position="138"/>
    </location>
</feature>
<feature type="glycosylation site" description="N-linked (GlcNAc...) asparagine" evidence="4">
    <location>
        <position position="180"/>
    </location>
</feature>
<feature type="glycosylation site" description="N-linked (GlcNAc...) asparagine" evidence="4">
    <location>
        <position position="311"/>
    </location>
</feature>
<feature type="glycosylation site" description="N-linked (GlcNAc...) asparagine" evidence="4">
    <location>
        <position position="355"/>
    </location>
</feature>
<feature type="glycosylation site" description="N-linked (GlcNAc...) asparagine" evidence="4">
    <location>
        <position position="516"/>
    </location>
</feature>
<feature type="disulfide bond" evidence="2">
    <location>
        <begin position="28"/>
        <end position="75"/>
    </location>
</feature>
<feature type="disulfide bond" evidence="2">
    <location>
        <begin position="63"/>
        <end position="114"/>
    </location>
</feature>
<feature type="disulfide bond" evidence="2">
    <location>
        <begin position="187"/>
        <end position="441"/>
    </location>
</feature>
<feature type="disulfide bond" evidence="2">
    <location>
        <begin position="256"/>
        <end position="273"/>
    </location>
</feature>
<feature type="disulfide bond" evidence="2">
    <location>
        <begin position="282"/>
        <end position="291"/>
    </location>
</feature>
<feature type="disulfide bond" evidence="2">
    <location>
        <begin position="503"/>
        <end position="525"/>
    </location>
</feature>
<dbReference type="EC" id="3.1.1.73" evidence="3"/>
<dbReference type="EMBL" id="CH476602">
    <property type="protein sequence ID" value="EAU33207.1"/>
    <property type="status" value="ALT_SEQ"/>
    <property type="molecule type" value="Genomic_DNA"/>
</dbReference>
<dbReference type="RefSeq" id="XP_001215841.1">
    <property type="nucleotide sequence ID" value="XM_001215841.1"/>
</dbReference>
<dbReference type="SMR" id="Q0CI21"/>
<dbReference type="STRING" id="341663.Q0CI21"/>
<dbReference type="ESTHER" id="asptn-faeb2">
    <property type="family name" value="Tannase"/>
</dbReference>
<dbReference type="GlyCosmos" id="Q0CI21">
    <property type="glycosylation" value="8 sites, No reported glycans"/>
</dbReference>
<dbReference type="GeneID" id="4322286"/>
<dbReference type="eggNOG" id="ENOG502QPXZ">
    <property type="taxonomic scope" value="Eukaryota"/>
</dbReference>
<dbReference type="OrthoDB" id="3039123at2759"/>
<dbReference type="Proteomes" id="UP000007963">
    <property type="component" value="Unassembled WGS sequence"/>
</dbReference>
<dbReference type="GO" id="GO:0005576">
    <property type="term" value="C:extracellular region"/>
    <property type="evidence" value="ECO:0007669"/>
    <property type="project" value="UniProtKB-SubCell"/>
</dbReference>
<dbReference type="GO" id="GO:0030600">
    <property type="term" value="F:feruloyl esterase activity"/>
    <property type="evidence" value="ECO:0007669"/>
    <property type="project" value="UniProtKB-EC"/>
</dbReference>
<dbReference type="GO" id="GO:0046872">
    <property type="term" value="F:metal ion binding"/>
    <property type="evidence" value="ECO:0007669"/>
    <property type="project" value="UniProtKB-KW"/>
</dbReference>
<dbReference type="GO" id="GO:0045493">
    <property type="term" value="P:xylan catabolic process"/>
    <property type="evidence" value="ECO:0007669"/>
    <property type="project" value="UniProtKB-KW"/>
</dbReference>
<dbReference type="Gene3D" id="3.40.50.1820">
    <property type="entry name" value="alpha/beta hydrolase"/>
    <property type="match status" value="1"/>
</dbReference>
<dbReference type="InterPro" id="IPR029058">
    <property type="entry name" value="AB_hydrolase_fold"/>
</dbReference>
<dbReference type="InterPro" id="IPR011118">
    <property type="entry name" value="Tannase/feruloyl_esterase"/>
</dbReference>
<dbReference type="PANTHER" id="PTHR33938">
    <property type="entry name" value="FERULOYL ESTERASE B-RELATED"/>
    <property type="match status" value="1"/>
</dbReference>
<dbReference type="PANTHER" id="PTHR33938:SF15">
    <property type="entry name" value="FERULOYL ESTERASE B-RELATED"/>
    <property type="match status" value="1"/>
</dbReference>
<dbReference type="Pfam" id="PF07519">
    <property type="entry name" value="Tannase"/>
    <property type="match status" value="1"/>
</dbReference>
<dbReference type="SUPFAM" id="SSF53474">
    <property type="entry name" value="alpha/beta-Hydrolases"/>
    <property type="match status" value="1"/>
</dbReference>
<keyword id="KW-0106">Calcium</keyword>
<keyword id="KW-0119">Carbohydrate metabolism</keyword>
<keyword id="KW-1015">Disulfide bond</keyword>
<keyword id="KW-0325">Glycoprotein</keyword>
<keyword id="KW-0378">Hydrolase</keyword>
<keyword id="KW-0479">Metal-binding</keyword>
<keyword id="KW-0624">Polysaccharide degradation</keyword>
<keyword id="KW-1185">Reference proteome</keyword>
<keyword id="KW-0964">Secreted</keyword>
<keyword id="KW-0719">Serine esterase</keyword>
<keyword id="KW-0732">Signal</keyword>
<keyword id="KW-0858">Xylan degradation</keyword>
<comment type="function">
    <text evidence="3">Involved in degradation of plant cell walls. Hydrolyzes the feruloyl-arabinose ester bond in arabinoxylans as well as the feruloyl-galactose and feruloyl-arabinose ester bonds in pectin.</text>
</comment>
<comment type="catalytic activity">
    <reaction evidence="3">
        <text>feruloyl-polysaccharide + H2O = ferulate + polysaccharide.</text>
        <dbReference type="EC" id="3.1.1.73"/>
    </reaction>
</comment>
<comment type="subcellular location">
    <subcellularLocation>
        <location evidence="1">Secreted</location>
    </subcellularLocation>
</comment>
<comment type="similarity">
    <text evidence="5">Belongs to the tannase family.</text>
</comment>
<comment type="sequence caution" evidence="5">
    <conflict type="erroneous gene model prediction">
        <sequence resource="EMBL-CDS" id="EAU33207"/>
    </conflict>
</comment>
<reference key="1">
    <citation type="submission" date="2005-09" db="EMBL/GenBank/DDBJ databases">
        <title>Annotation of the Aspergillus terreus NIH2624 genome.</title>
        <authorList>
            <person name="Birren B.W."/>
            <person name="Lander E.S."/>
            <person name="Galagan J.E."/>
            <person name="Nusbaum C."/>
            <person name="Devon K."/>
            <person name="Henn M."/>
            <person name="Ma L.-J."/>
            <person name="Jaffe D.B."/>
            <person name="Butler J."/>
            <person name="Alvarez P."/>
            <person name="Gnerre S."/>
            <person name="Grabherr M."/>
            <person name="Kleber M."/>
            <person name="Mauceli E.W."/>
            <person name="Brockman W."/>
            <person name="Rounsley S."/>
            <person name="Young S.K."/>
            <person name="LaButti K."/>
            <person name="Pushparaj V."/>
            <person name="DeCaprio D."/>
            <person name="Crawford M."/>
            <person name="Koehrsen M."/>
            <person name="Engels R."/>
            <person name="Montgomery P."/>
            <person name="Pearson M."/>
            <person name="Howarth C."/>
            <person name="Larson L."/>
            <person name="Luoma S."/>
            <person name="White J."/>
            <person name="Alvarado L."/>
            <person name="Kodira C.D."/>
            <person name="Zeng Q."/>
            <person name="Oleary S."/>
            <person name="Yandava C."/>
            <person name="Denning D.W."/>
            <person name="Nierman W.C."/>
            <person name="Milne T."/>
            <person name="Madden K."/>
        </authorList>
    </citation>
    <scope>NUCLEOTIDE SEQUENCE [LARGE SCALE GENOMIC DNA]</scope>
    <source>
        <strain>NIH 2624 / FGSC A1156</strain>
    </source>
</reference>
<proteinExistence type="inferred from homology"/>
<accession>Q0CI21</accession>
<sequence length="527" mass="57504">MAPIHYLLPIITLGSAALARQDAFEAKCHSFANKIHLPNVHVNFASYVPGGTNLTLADNPSSCGATSQSVSADVCRVAMAVATSNSSEITLEAWFPRNYTGRFLSTGNGGLSGCIQYYDMAYTTGFGFATVGANNGHNGTSGEPFYHHPEVLEDFAYRSIHTGVVIGKKLTKMFYEEGFNKSYYLGCSTGGRQGFKSVQKYPNDFDGVVAGAPAFNFANLISWSAHFYPITGPPGSDTYLSPAMWKVAHDEIIRQCDQIDGAKDGIIEDPSLCNPIMETIICKPGASSDNCLSAAQAKTVREVLYPLYGVNGTLLYPRMQPGSEVLAAPIMYNGQPFAYSTDWYRYVVYNDPNWNGTTFDVQDAAAALAQNPYNIQTWDADLTPFRKSGGKVLTYHGLQDQLISSENSKLYYARVAETMGMPPEELDEFYRFFQISGMGHCGGGDGAYGIGNGLATYSGKDPENNVLMAMVQWVEKGIAPETVRGAKFANGPGSTVEYSRKHCRYPRRNVFKGPGNYTDENAWECVV</sequence>
<evidence type="ECO:0000250" key="1"/>
<evidence type="ECO:0000250" key="2">
    <source>
        <dbReference type="UniProtKB" id="Q2UP89"/>
    </source>
</evidence>
<evidence type="ECO:0000250" key="3">
    <source>
        <dbReference type="UniProtKB" id="Q8WZI8"/>
    </source>
</evidence>
<evidence type="ECO:0000255" key="4"/>
<evidence type="ECO:0000305" key="5"/>
<gene>
    <name type="primary">faeB-2</name>
    <name type="ORF">ATEG_06663</name>
</gene>
<organism>
    <name type="scientific">Aspergillus terreus (strain NIH 2624 / FGSC A1156)</name>
    <dbReference type="NCBI Taxonomy" id="341663"/>
    <lineage>
        <taxon>Eukaryota</taxon>
        <taxon>Fungi</taxon>
        <taxon>Dikarya</taxon>
        <taxon>Ascomycota</taxon>
        <taxon>Pezizomycotina</taxon>
        <taxon>Eurotiomycetes</taxon>
        <taxon>Eurotiomycetidae</taxon>
        <taxon>Eurotiales</taxon>
        <taxon>Aspergillaceae</taxon>
        <taxon>Aspergillus</taxon>
        <taxon>Aspergillus subgen. Circumdati</taxon>
    </lineage>
</organism>